<protein>
    <recommendedName>
        <fullName evidence="4">Dolichyl-diphosphooligosaccharide--protein glycosyltransferase subunit DAD1</fullName>
        <shortName>Oligosaccharyl transferase subunit DAD1</shortName>
    </recommendedName>
    <alternativeName>
        <fullName>Defender against cell death 1</fullName>
        <shortName>DAD-1</shortName>
    </alternativeName>
</protein>
<reference key="1">
    <citation type="submission" date="1997-05" db="EMBL/GenBank/DDBJ databases">
        <title>Molecular cloning of the murine homologue of DAD-1, an ubiquitously expressed and highly conserved suppressor of apoptosis.</title>
        <authorList>
            <person name="Giegerich G."/>
        </authorList>
    </citation>
    <scope>NUCLEOTIDE SEQUENCE [GENOMIC DNA]</scope>
    <source>
        <strain>Lewis</strain>
    </source>
</reference>
<reference key="2">
    <citation type="journal article" date="2004" name="Genome Res.">
        <title>The status, quality, and expansion of the NIH full-length cDNA project: the Mammalian Gene Collection (MGC).</title>
        <authorList>
            <consortium name="The MGC Project Team"/>
        </authorList>
    </citation>
    <scope>NUCLEOTIDE SEQUENCE [LARGE SCALE MRNA]</scope>
    <source>
        <tissue>Pituitary</tissue>
    </source>
</reference>
<sequence>MSASVVSVISRFLEEYLSSTPQRLKLLDAYLLYILLTGALQFGYCLLVGTFPFNSFLSGFISCVGSFILAVCLRIQINPQNKADFQGISPERAFADFLFASTILHLVVMNFVG</sequence>
<feature type="initiator methionine" description="Removed" evidence="2">
    <location>
        <position position="1"/>
    </location>
</feature>
<feature type="chain" id="PRO_0000124014" description="Dolichyl-diphosphooligosaccharide--protein glycosyltransferase subunit DAD1">
    <location>
        <begin position="2"/>
        <end position="113"/>
    </location>
</feature>
<feature type="topological domain" description="Cytoplasmic" evidence="3">
    <location>
        <begin position="2"/>
        <end position="30"/>
    </location>
</feature>
<feature type="transmembrane region" description="Helical" evidence="3">
    <location>
        <begin position="31"/>
        <end position="51"/>
    </location>
</feature>
<feature type="topological domain" description="Lumenal" evidence="3">
    <location>
        <position position="52"/>
    </location>
</feature>
<feature type="transmembrane region" description="Helical" evidence="3">
    <location>
        <begin position="53"/>
        <end position="73"/>
    </location>
</feature>
<feature type="topological domain" description="Cytoplasmic" evidence="3">
    <location>
        <begin position="74"/>
        <end position="92"/>
    </location>
</feature>
<feature type="transmembrane region" description="Helical" evidence="3">
    <location>
        <begin position="93"/>
        <end position="113"/>
    </location>
</feature>
<feature type="modified residue" description="N-acetylserine" evidence="2">
    <location>
        <position position="2"/>
    </location>
</feature>
<organism>
    <name type="scientific">Rattus norvegicus</name>
    <name type="common">Rat</name>
    <dbReference type="NCBI Taxonomy" id="10116"/>
    <lineage>
        <taxon>Eukaryota</taxon>
        <taxon>Metazoa</taxon>
        <taxon>Chordata</taxon>
        <taxon>Craniata</taxon>
        <taxon>Vertebrata</taxon>
        <taxon>Euteleostomi</taxon>
        <taxon>Mammalia</taxon>
        <taxon>Eutheria</taxon>
        <taxon>Euarchontoglires</taxon>
        <taxon>Glires</taxon>
        <taxon>Rodentia</taxon>
        <taxon>Myomorpha</taxon>
        <taxon>Muroidea</taxon>
        <taxon>Muridae</taxon>
        <taxon>Murinae</taxon>
        <taxon>Rattus</taxon>
    </lineage>
</organism>
<proteinExistence type="inferred from homology"/>
<keyword id="KW-0007">Acetylation</keyword>
<keyword id="KW-0053">Apoptosis</keyword>
<keyword id="KW-0256">Endoplasmic reticulum</keyword>
<keyword id="KW-0472">Membrane</keyword>
<keyword id="KW-1185">Reference proteome</keyword>
<keyword id="KW-0812">Transmembrane</keyword>
<keyword id="KW-1133">Transmembrane helix</keyword>
<accession>P61805</accession>
<accession>O08552</accession>
<accession>O70364</accession>
<accession>P46966</accession>
<accession>P46968</accession>
<accession>Q96GB7</accession>
<gene>
    <name evidence="5" type="primary">Dad1</name>
</gene>
<dbReference type="EMBL" id="Y13336">
    <property type="protein sequence ID" value="CAA73780.1"/>
    <property type="molecule type" value="Genomic_DNA"/>
</dbReference>
<dbReference type="EMBL" id="BC061530">
    <property type="protein sequence ID" value="AAH61530.1"/>
    <property type="molecule type" value="mRNA"/>
</dbReference>
<dbReference type="RefSeq" id="NP_620265.1">
    <property type="nucleotide sequence ID" value="NM_138910.4"/>
</dbReference>
<dbReference type="SMR" id="P61805"/>
<dbReference type="FunCoup" id="P61805">
    <property type="interactions" value="2453"/>
</dbReference>
<dbReference type="IntAct" id="P61805">
    <property type="interactions" value="2"/>
</dbReference>
<dbReference type="MINT" id="P61805"/>
<dbReference type="STRING" id="10116.ENSRNOP00000012233"/>
<dbReference type="PhosphoSitePlus" id="P61805"/>
<dbReference type="jPOST" id="P61805"/>
<dbReference type="PaxDb" id="10116-ENSRNOP00000012233"/>
<dbReference type="Ensembl" id="ENSRNOT00000098684.1">
    <property type="protein sequence ID" value="ENSRNOP00000092852.1"/>
    <property type="gene ID" value="ENSRNOG00000009090.6"/>
</dbReference>
<dbReference type="GeneID" id="192275"/>
<dbReference type="KEGG" id="rno:192275"/>
<dbReference type="UCSC" id="RGD:621028">
    <property type="organism name" value="rat"/>
</dbReference>
<dbReference type="AGR" id="RGD:621028"/>
<dbReference type="CTD" id="1603"/>
<dbReference type="RGD" id="621028">
    <property type="gene designation" value="Dad1"/>
</dbReference>
<dbReference type="eggNOG" id="KOG1746">
    <property type="taxonomic scope" value="Eukaryota"/>
</dbReference>
<dbReference type="GeneTree" id="ENSGT00390000003324"/>
<dbReference type="HOGENOM" id="CLU_111220_2_1_1"/>
<dbReference type="InParanoid" id="P61805"/>
<dbReference type="PhylomeDB" id="P61805"/>
<dbReference type="TreeFam" id="TF312846"/>
<dbReference type="UniPathway" id="UPA00378"/>
<dbReference type="PRO" id="PR:P61805"/>
<dbReference type="Proteomes" id="UP000002494">
    <property type="component" value="Chromosome 15"/>
</dbReference>
<dbReference type="Bgee" id="ENSRNOG00000009090">
    <property type="expression patterns" value="Expressed in pancreas and 20 other cell types or tissues"/>
</dbReference>
<dbReference type="GO" id="GO:0008250">
    <property type="term" value="C:oligosaccharyltransferase complex"/>
    <property type="evidence" value="ECO:0000250"/>
    <property type="project" value="UniProtKB"/>
</dbReference>
<dbReference type="GO" id="GO:0160226">
    <property type="term" value="C:oligosaccharyltransferase complex A"/>
    <property type="evidence" value="ECO:0000266"/>
    <property type="project" value="RGD"/>
</dbReference>
<dbReference type="GO" id="GO:0160227">
    <property type="term" value="C:oligosaccharyltransferase complex B"/>
    <property type="evidence" value="ECO:0000266"/>
    <property type="project" value="RGD"/>
</dbReference>
<dbReference type="GO" id="GO:0008047">
    <property type="term" value="F:enzyme activator activity"/>
    <property type="evidence" value="ECO:0000266"/>
    <property type="project" value="RGD"/>
</dbReference>
<dbReference type="GO" id="GO:0006915">
    <property type="term" value="P:apoptotic process"/>
    <property type="evidence" value="ECO:0000266"/>
    <property type="project" value="RGD"/>
</dbReference>
<dbReference type="GO" id="GO:0001824">
    <property type="term" value="P:blastocyst development"/>
    <property type="evidence" value="ECO:0000266"/>
    <property type="project" value="RGD"/>
</dbReference>
<dbReference type="GO" id="GO:0043066">
    <property type="term" value="P:negative regulation of apoptotic process"/>
    <property type="evidence" value="ECO:0000266"/>
    <property type="project" value="RGD"/>
</dbReference>
<dbReference type="GO" id="GO:0006486">
    <property type="term" value="P:protein glycosylation"/>
    <property type="evidence" value="ECO:0000250"/>
    <property type="project" value="UniProtKB"/>
</dbReference>
<dbReference type="GO" id="GO:0006487">
    <property type="term" value="P:protein N-linked glycosylation"/>
    <property type="evidence" value="ECO:0000318"/>
    <property type="project" value="GO_Central"/>
</dbReference>
<dbReference type="GO" id="GO:0018279">
    <property type="term" value="P:protein N-linked glycosylation via asparagine"/>
    <property type="evidence" value="ECO:0000266"/>
    <property type="project" value="RGD"/>
</dbReference>
<dbReference type="GO" id="GO:0031647">
    <property type="term" value="P:regulation of protein stability"/>
    <property type="evidence" value="ECO:0000266"/>
    <property type="project" value="RGD"/>
</dbReference>
<dbReference type="GO" id="GO:0007584">
    <property type="term" value="P:response to nutrient"/>
    <property type="evidence" value="ECO:0000270"/>
    <property type="project" value="RGD"/>
</dbReference>
<dbReference type="GO" id="GO:0009410">
    <property type="term" value="P:response to xenobiotic stimulus"/>
    <property type="evidence" value="ECO:0000270"/>
    <property type="project" value="RGD"/>
</dbReference>
<dbReference type="InterPro" id="IPR003038">
    <property type="entry name" value="DAD/Ost2"/>
</dbReference>
<dbReference type="PANTHER" id="PTHR10705">
    <property type="entry name" value="DOLICHYL-DIPHOSPHOOLIGOSACCHARIDE--PROTEIN GLYCOSYLTRANSFERASE SUBUNIT DAD1"/>
    <property type="match status" value="1"/>
</dbReference>
<dbReference type="PANTHER" id="PTHR10705:SF0">
    <property type="entry name" value="DOLICHYL-DIPHOSPHOOLIGOSACCHARIDE--PROTEIN GLYCOSYLTRANSFERASE SUBUNIT DAD1"/>
    <property type="match status" value="1"/>
</dbReference>
<dbReference type="Pfam" id="PF02109">
    <property type="entry name" value="DAD"/>
    <property type="match status" value="1"/>
</dbReference>
<dbReference type="PIRSF" id="PIRSF005588">
    <property type="entry name" value="DAD"/>
    <property type="match status" value="1"/>
</dbReference>
<name>DAD1_RAT</name>
<comment type="function">
    <text evidence="1 2">Subunit of the oligosaccharyl transferase (OST) complex that catalyzes the initial transfer of a defined glycan (Glc(3)Man(9)GlcNAc(2) in eukaryotes) from the lipid carrier dolichol-pyrophosphate to an asparagine residue within an Asn-X-Ser/Thr consensus motif in nascent polypeptide chains, the first step in protein N-glycosylation (By similarity). N-glycosylation occurs cotranslationally and the complex associates with the Sec61 complex at the channel-forming translocon complex that mediates protein translocation across the endoplasmic reticulum (ER). All subunits are required for a maximal enzyme activity.</text>
</comment>
<comment type="pathway">
    <text evidence="2">Protein modification; protein glycosylation.</text>
</comment>
<comment type="subunit">
    <text evidence="1 2">Component of the oligosaccharyltransferase (OST) complex (By similarity). OST exists in two different complex forms which contain common core subunits RPN1, RPN2, OST48, OST4, DAD1 and TMEM258, either STT3A or STT3B as catalytic subunits, and form-specific accessory subunits (By similarity). STT3A complex assembly occurs through the formation of 3 subcomplexes. Subcomplex 1 contains RPN1 and TMEM258, subcomplex 2 contains the STT3A-specific subunits STT3A, DC2/OSTC, and KCP2 as well as the core subunit OST4, and subcomplex 3 contains RPN2, DAD1, and OST48. The STT3A complex can form stable complexes with the Sec61 complex or with both the Sec61 and TRAP complexes.</text>
</comment>
<comment type="subcellular location">
    <subcellularLocation>
        <location>Endoplasmic reticulum membrane</location>
        <topology evidence="4">Multi-pass membrane protein</topology>
    </subcellularLocation>
</comment>
<comment type="similarity">
    <text evidence="4">Belongs to the DAD/OST2 family.</text>
</comment>
<evidence type="ECO:0000250" key="1">
    <source>
        <dbReference type="UniProtKB" id="E2R4X3"/>
    </source>
</evidence>
<evidence type="ECO:0000250" key="2">
    <source>
        <dbReference type="UniProtKB" id="P61803"/>
    </source>
</evidence>
<evidence type="ECO:0000255" key="3"/>
<evidence type="ECO:0000305" key="4"/>
<evidence type="ECO:0000312" key="5">
    <source>
        <dbReference type="RGD" id="621028"/>
    </source>
</evidence>